<keyword id="KW-0131">Cell cycle</keyword>
<keyword id="KW-0132">Cell division</keyword>
<keyword id="KW-0342">GTP-binding</keyword>
<keyword id="KW-0460">Magnesium</keyword>
<keyword id="KW-0479">Metal-binding</keyword>
<keyword id="KW-0547">Nucleotide-binding</keyword>
<keyword id="KW-0717">Septation</keyword>
<feature type="chain" id="PRO_1000115952" description="Probable GTP-binding protein EngB">
    <location>
        <begin position="1"/>
        <end position="216"/>
    </location>
</feature>
<feature type="domain" description="EngB-type G" evidence="1">
    <location>
        <begin position="24"/>
        <end position="205"/>
    </location>
</feature>
<feature type="binding site" evidence="1">
    <location>
        <begin position="32"/>
        <end position="39"/>
    </location>
    <ligand>
        <name>GTP</name>
        <dbReference type="ChEBI" id="CHEBI:37565"/>
    </ligand>
</feature>
<feature type="binding site" evidence="1">
    <location>
        <position position="39"/>
    </location>
    <ligand>
        <name>Mg(2+)</name>
        <dbReference type="ChEBI" id="CHEBI:18420"/>
    </ligand>
</feature>
<feature type="binding site" evidence="1">
    <location>
        <begin position="59"/>
        <end position="63"/>
    </location>
    <ligand>
        <name>GTP</name>
        <dbReference type="ChEBI" id="CHEBI:37565"/>
    </ligand>
</feature>
<feature type="binding site" evidence="1">
    <location>
        <position position="61"/>
    </location>
    <ligand>
        <name>Mg(2+)</name>
        <dbReference type="ChEBI" id="CHEBI:18420"/>
    </ligand>
</feature>
<feature type="binding site" evidence="1">
    <location>
        <begin position="86"/>
        <end position="89"/>
    </location>
    <ligand>
        <name>GTP</name>
        <dbReference type="ChEBI" id="CHEBI:37565"/>
    </ligand>
</feature>
<feature type="binding site" evidence="1">
    <location>
        <begin position="153"/>
        <end position="156"/>
    </location>
    <ligand>
        <name>GTP</name>
        <dbReference type="ChEBI" id="CHEBI:37565"/>
    </ligand>
</feature>
<feature type="binding site" evidence="1">
    <location>
        <begin position="184"/>
        <end position="186"/>
    </location>
    <ligand>
        <name>GTP</name>
        <dbReference type="ChEBI" id="CHEBI:37565"/>
    </ligand>
</feature>
<comment type="function">
    <text evidence="1">Necessary for normal cell division and for the maintenance of normal septation.</text>
</comment>
<comment type="cofactor">
    <cofactor evidence="1">
        <name>Mg(2+)</name>
        <dbReference type="ChEBI" id="CHEBI:18420"/>
    </cofactor>
</comment>
<comment type="similarity">
    <text evidence="1">Belongs to the TRAFAC class TrmE-Era-EngA-EngB-Septin-like GTPase superfamily. EngB GTPase family.</text>
</comment>
<name>ENGB_ANASK</name>
<organism>
    <name type="scientific">Anaeromyxobacter sp. (strain K)</name>
    <dbReference type="NCBI Taxonomy" id="447217"/>
    <lineage>
        <taxon>Bacteria</taxon>
        <taxon>Pseudomonadati</taxon>
        <taxon>Myxococcota</taxon>
        <taxon>Myxococcia</taxon>
        <taxon>Myxococcales</taxon>
        <taxon>Cystobacterineae</taxon>
        <taxon>Anaeromyxobacteraceae</taxon>
        <taxon>Anaeromyxobacter</taxon>
    </lineage>
</organism>
<evidence type="ECO:0000255" key="1">
    <source>
        <dbReference type="HAMAP-Rule" id="MF_00321"/>
    </source>
</evidence>
<sequence>MPIQVVSADFAKTATRPEEWPRGATPEIAFVGRSNVGKSSMLNALARRKGLARVSSTPGRTRALQFFDLSYRPTPAARPRAIRFCDLPGYGYAKVARAERDRWTAMIEDYLRDRDVLRAVVLIVDARHPPSESDEDAAAFLVSAGRRLVVAATKTDKLPKARRVLALQQVERALGLARGDAVPFSAVEGTGTDALWARLAALAAEEPQTAEAEPPA</sequence>
<proteinExistence type="inferred from homology"/>
<protein>
    <recommendedName>
        <fullName evidence="1">Probable GTP-binding protein EngB</fullName>
    </recommendedName>
</protein>
<reference key="1">
    <citation type="submission" date="2008-08" db="EMBL/GenBank/DDBJ databases">
        <title>Complete sequence of Anaeromyxobacter sp. K.</title>
        <authorList>
            <consortium name="US DOE Joint Genome Institute"/>
            <person name="Lucas S."/>
            <person name="Copeland A."/>
            <person name="Lapidus A."/>
            <person name="Glavina del Rio T."/>
            <person name="Dalin E."/>
            <person name="Tice H."/>
            <person name="Bruce D."/>
            <person name="Goodwin L."/>
            <person name="Pitluck S."/>
            <person name="Saunders E."/>
            <person name="Brettin T."/>
            <person name="Detter J.C."/>
            <person name="Han C."/>
            <person name="Larimer F."/>
            <person name="Land M."/>
            <person name="Hauser L."/>
            <person name="Kyrpides N."/>
            <person name="Ovchinnikiva G."/>
            <person name="Beliaev A."/>
        </authorList>
    </citation>
    <scope>NUCLEOTIDE SEQUENCE [LARGE SCALE GENOMIC DNA]</scope>
    <source>
        <strain>K</strain>
    </source>
</reference>
<accession>B4UHX9</accession>
<gene>
    <name evidence="1" type="primary">engB</name>
    <name type="ordered locus">AnaeK_2774</name>
</gene>
<dbReference type="EMBL" id="CP001131">
    <property type="protein sequence ID" value="ACG73999.1"/>
    <property type="molecule type" value="Genomic_DNA"/>
</dbReference>
<dbReference type="RefSeq" id="WP_012526779.1">
    <property type="nucleotide sequence ID" value="NC_011145.1"/>
</dbReference>
<dbReference type="SMR" id="B4UHX9"/>
<dbReference type="KEGG" id="ank:AnaeK_2774"/>
<dbReference type="HOGENOM" id="CLU_033732_3_0_7"/>
<dbReference type="OrthoDB" id="9804921at2"/>
<dbReference type="Proteomes" id="UP000001871">
    <property type="component" value="Chromosome"/>
</dbReference>
<dbReference type="GO" id="GO:0005829">
    <property type="term" value="C:cytosol"/>
    <property type="evidence" value="ECO:0007669"/>
    <property type="project" value="TreeGrafter"/>
</dbReference>
<dbReference type="GO" id="GO:0005525">
    <property type="term" value="F:GTP binding"/>
    <property type="evidence" value="ECO:0007669"/>
    <property type="project" value="UniProtKB-UniRule"/>
</dbReference>
<dbReference type="GO" id="GO:0046872">
    <property type="term" value="F:metal ion binding"/>
    <property type="evidence" value="ECO:0007669"/>
    <property type="project" value="UniProtKB-KW"/>
</dbReference>
<dbReference type="GO" id="GO:0000917">
    <property type="term" value="P:division septum assembly"/>
    <property type="evidence" value="ECO:0007669"/>
    <property type="project" value="UniProtKB-KW"/>
</dbReference>
<dbReference type="CDD" id="cd01876">
    <property type="entry name" value="YihA_EngB"/>
    <property type="match status" value="1"/>
</dbReference>
<dbReference type="Gene3D" id="3.40.50.300">
    <property type="entry name" value="P-loop containing nucleotide triphosphate hydrolases"/>
    <property type="match status" value="1"/>
</dbReference>
<dbReference type="HAMAP" id="MF_00321">
    <property type="entry name" value="GTPase_EngB"/>
    <property type="match status" value="1"/>
</dbReference>
<dbReference type="InterPro" id="IPR030393">
    <property type="entry name" value="G_ENGB_dom"/>
</dbReference>
<dbReference type="InterPro" id="IPR006073">
    <property type="entry name" value="GTP-bd"/>
</dbReference>
<dbReference type="InterPro" id="IPR019987">
    <property type="entry name" value="GTP-bd_ribosome_bio_YsxC"/>
</dbReference>
<dbReference type="InterPro" id="IPR027417">
    <property type="entry name" value="P-loop_NTPase"/>
</dbReference>
<dbReference type="NCBIfam" id="TIGR03598">
    <property type="entry name" value="GTPase_YsxC"/>
    <property type="match status" value="1"/>
</dbReference>
<dbReference type="PANTHER" id="PTHR11649:SF13">
    <property type="entry name" value="ENGB-TYPE G DOMAIN-CONTAINING PROTEIN"/>
    <property type="match status" value="1"/>
</dbReference>
<dbReference type="PANTHER" id="PTHR11649">
    <property type="entry name" value="MSS1/TRME-RELATED GTP-BINDING PROTEIN"/>
    <property type="match status" value="1"/>
</dbReference>
<dbReference type="Pfam" id="PF01926">
    <property type="entry name" value="MMR_HSR1"/>
    <property type="match status" value="1"/>
</dbReference>
<dbReference type="SUPFAM" id="SSF52540">
    <property type="entry name" value="P-loop containing nucleoside triphosphate hydrolases"/>
    <property type="match status" value="1"/>
</dbReference>
<dbReference type="PROSITE" id="PS51706">
    <property type="entry name" value="G_ENGB"/>
    <property type="match status" value="1"/>
</dbReference>